<organism>
    <name type="scientific">Pseudomonas amygdali pv. tabaci</name>
    <name type="common">Pseudomonas syringae pv. tabaci</name>
    <dbReference type="NCBI Taxonomy" id="322"/>
    <lineage>
        <taxon>Bacteria</taxon>
        <taxon>Pseudomonadati</taxon>
        <taxon>Pseudomonadota</taxon>
        <taxon>Gammaproteobacteria</taxon>
        <taxon>Pseudomonadales</taxon>
        <taxon>Pseudomonadaceae</taxon>
        <taxon>Pseudomonas</taxon>
        <taxon>Pseudomonas amygdali</taxon>
    </lineage>
</organism>
<gene>
    <name evidence="1" type="primary">dapB</name>
</gene>
<reference key="1">
    <citation type="journal article" date="1997" name="J. Bacteriol.">
        <title>Characterization of dapB, a gene required by Pseudomonas syringae pv. tabaci BR2.024 for lysine and tabtoxinine-beta-lactam biosynthesis.</title>
        <authorList>
            <person name="Liu L."/>
            <person name="Shaw P.D."/>
        </authorList>
    </citation>
    <scope>NUCLEOTIDE SEQUENCE [GENOMIC DNA]</scope>
    <source>
        <strain>PTBR2.024</strain>
    </source>
</reference>
<accession>Q52419</accession>
<dbReference type="EC" id="1.17.1.8" evidence="1"/>
<dbReference type="EMBL" id="U47017">
    <property type="protein sequence ID" value="AAB41563.1"/>
    <property type="molecule type" value="Genomic_DNA"/>
</dbReference>
<dbReference type="RefSeq" id="WP_004656680.1">
    <property type="nucleotide sequence ID" value="NZ_QPDZ01000019.1"/>
</dbReference>
<dbReference type="SMR" id="Q52419"/>
<dbReference type="GeneID" id="61871778"/>
<dbReference type="UniPathway" id="UPA00034">
    <property type="reaction ID" value="UER00018"/>
</dbReference>
<dbReference type="GO" id="GO:0005829">
    <property type="term" value="C:cytosol"/>
    <property type="evidence" value="ECO:0007669"/>
    <property type="project" value="TreeGrafter"/>
</dbReference>
<dbReference type="GO" id="GO:0008839">
    <property type="term" value="F:4-hydroxy-tetrahydrodipicolinate reductase"/>
    <property type="evidence" value="ECO:0007669"/>
    <property type="project" value="UniProtKB-EC"/>
</dbReference>
<dbReference type="GO" id="GO:0051287">
    <property type="term" value="F:NAD binding"/>
    <property type="evidence" value="ECO:0007669"/>
    <property type="project" value="UniProtKB-UniRule"/>
</dbReference>
<dbReference type="GO" id="GO:0050661">
    <property type="term" value="F:NADP binding"/>
    <property type="evidence" value="ECO:0007669"/>
    <property type="project" value="UniProtKB-UniRule"/>
</dbReference>
<dbReference type="GO" id="GO:0016726">
    <property type="term" value="F:oxidoreductase activity, acting on CH or CH2 groups, NAD or NADP as acceptor"/>
    <property type="evidence" value="ECO:0007669"/>
    <property type="project" value="UniProtKB-UniRule"/>
</dbReference>
<dbReference type="GO" id="GO:0019877">
    <property type="term" value="P:diaminopimelate biosynthetic process"/>
    <property type="evidence" value="ECO:0007669"/>
    <property type="project" value="UniProtKB-UniRule"/>
</dbReference>
<dbReference type="GO" id="GO:0009089">
    <property type="term" value="P:lysine biosynthetic process via diaminopimelate"/>
    <property type="evidence" value="ECO:0007669"/>
    <property type="project" value="UniProtKB-UniRule"/>
</dbReference>
<dbReference type="CDD" id="cd02274">
    <property type="entry name" value="DHDPR_N"/>
    <property type="match status" value="1"/>
</dbReference>
<dbReference type="FunFam" id="3.30.360.10:FF:000004">
    <property type="entry name" value="4-hydroxy-tetrahydrodipicolinate reductase"/>
    <property type="match status" value="1"/>
</dbReference>
<dbReference type="FunFam" id="3.40.50.720:FF:000048">
    <property type="entry name" value="4-hydroxy-tetrahydrodipicolinate reductase"/>
    <property type="match status" value="1"/>
</dbReference>
<dbReference type="Gene3D" id="3.30.360.10">
    <property type="entry name" value="Dihydrodipicolinate Reductase, domain 2"/>
    <property type="match status" value="1"/>
</dbReference>
<dbReference type="Gene3D" id="3.40.50.720">
    <property type="entry name" value="NAD(P)-binding Rossmann-like Domain"/>
    <property type="match status" value="1"/>
</dbReference>
<dbReference type="HAMAP" id="MF_00102">
    <property type="entry name" value="DapB"/>
    <property type="match status" value="1"/>
</dbReference>
<dbReference type="InterPro" id="IPR022663">
    <property type="entry name" value="DapB_C"/>
</dbReference>
<dbReference type="InterPro" id="IPR000846">
    <property type="entry name" value="DapB_N"/>
</dbReference>
<dbReference type="InterPro" id="IPR022664">
    <property type="entry name" value="DapB_N_CS"/>
</dbReference>
<dbReference type="InterPro" id="IPR023940">
    <property type="entry name" value="DHDPR_bac"/>
</dbReference>
<dbReference type="InterPro" id="IPR036291">
    <property type="entry name" value="NAD(P)-bd_dom_sf"/>
</dbReference>
<dbReference type="NCBIfam" id="TIGR00036">
    <property type="entry name" value="dapB"/>
    <property type="match status" value="1"/>
</dbReference>
<dbReference type="PANTHER" id="PTHR20836:SF0">
    <property type="entry name" value="4-HYDROXY-TETRAHYDRODIPICOLINATE REDUCTASE 1, CHLOROPLASTIC-RELATED"/>
    <property type="match status" value="1"/>
</dbReference>
<dbReference type="PANTHER" id="PTHR20836">
    <property type="entry name" value="DIHYDRODIPICOLINATE REDUCTASE"/>
    <property type="match status" value="1"/>
</dbReference>
<dbReference type="Pfam" id="PF05173">
    <property type="entry name" value="DapB_C"/>
    <property type="match status" value="1"/>
</dbReference>
<dbReference type="Pfam" id="PF01113">
    <property type="entry name" value="DapB_N"/>
    <property type="match status" value="1"/>
</dbReference>
<dbReference type="PIRSF" id="PIRSF000161">
    <property type="entry name" value="DHPR"/>
    <property type="match status" value="1"/>
</dbReference>
<dbReference type="SUPFAM" id="SSF55347">
    <property type="entry name" value="Glyceraldehyde-3-phosphate dehydrogenase-like, C-terminal domain"/>
    <property type="match status" value="1"/>
</dbReference>
<dbReference type="SUPFAM" id="SSF51735">
    <property type="entry name" value="NAD(P)-binding Rossmann-fold domains"/>
    <property type="match status" value="1"/>
</dbReference>
<dbReference type="PROSITE" id="PS01298">
    <property type="entry name" value="DAPB"/>
    <property type="match status" value="1"/>
</dbReference>
<comment type="function">
    <text evidence="1">Catalyzes the conversion of 4-hydroxy-tetrahydrodipicolinate (HTPA) to tetrahydrodipicolinate.</text>
</comment>
<comment type="catalytic activity">
    <reaction evidence="1">
        <text>(S)-2,3,4,5-tetrahydrodipicolinate + NAD(+) + H2O = (2S,4S)-4-hydroxy-2,3,4,5-tetrahydrodipicolinate + NADH + H(+)</text>
        <dbReference type="Rhea" id="RHEA:35323"/>
        <dbReference type="ChEBI" id="CHEBI:15377"/>
        <dbReference type="ChEBI" id="CHEBI:15378"/>
        <dbReference type="ChEBI" id="CHEBI:16845"/>
        <dbReference type="ChEBI" id="CHEBI:57540"/>
        <dbReference type="ChEBI" id="CHEBI:57945"/>
        <dbReference type="ChEBI" id="CHEBI:67139"/>
        <dbReference type="EC" id="1.17.1.8"/>
    </reaction>
</comment>
<comment type="catalytic activity">
    <reaction evidence="1">
        <text>(S)-2,3,4,5-tetrahydrodipicolinate + NADP(+) + H2O = (2S,4S)-4-hydroxy-2,3,4,5-tetrahydrodipicolinate + NADPH + H(+)</text>
        <dbReference type="Rhea" id="RHEA:35331"/>
        <dbReference type="ChEBI" id="CHEBI:15377"/>
        <dbReference type="ChEBI" id="CHEBI:15378"/>
        <dbReference type="ChEBI" id="CHEBI:16845"/>
        <dbReference type="ChEBI" id="CHEBI:57783"/>
        <dbReference type="ChEBI" id="CHEBI:58349"/>
        <dbReference type="ChEBI" id="CHEBI:67139"/>
        <dbReference type="EC" id="1.17.1.8"/>
    </reaction>
</comment>
<comment type="pathway">
    <text evidence="1">Amino-acid biosynthesis; L-lysine biosynthesis via DAP pathway; (S)-tetrahydrodipicolinate from L-aspartate: step 4/4.</text>
</comment>
<comment type="subcellular location">
    <subcellularLocation>
        <location evidence="1">Cytoplasm</location>
    </subcellularLocation>
</comment>
<comment type="similarity">
    <text evidence="1">Belongs to the DapB family.</text>
</comment>
<comment type="caution">
    <text evidence="2">Was originally thought to be a dihydrodipicolinate reductase (DHDPR), catalyzing the conversion of dihydrodipicolinate to tetrahydrodipicolinate. However, it was shown in E.coli that the substrate of the enzymatic reaction is not dihydrodipicolinate (DHDP) but in fact (2S,4S)-4-hydroxy-2,3,4,5-tetrahydrodipicolinic acid (HTPA), the product released by the DapA-catalyzed reaction.</text>
</comment>
<name>DAPB_PSEAJ</name>
<evidence type="ECO:0000255" key="1">
    <source>
        <dbReference type="HAMAP-Rule" id="MF_00102"/>
    </source>
</evidence>
<evidence type="ECO:0000305" key="2"/>
<protein>
    <recommendedName>
        <fullName evidence="1">4-hydroxy-tetrahydrodipicolinate reductase</fullName>
        <shortName evidence="1">HTPA reductase</shortName>
        <ecNumber evidence="1">1.17.1.8</ecNumber>
    </recommendedName>
</protein>
<sequence length="267" mass="28066">MRRIAVVGAAGRMGKTLIEAVQQAPGAGLTAAIDRPDSTLVGADAGELAALGRIGVPLSGDLAKVADEFDVLIDFTHPSVTLKNLAFCRKAGKAMIIGTTGFSAEEKQRLVEAGKDIPIVFAANFSIGVNLCLKLLDTAARVLGDEVDIEITEAHHRHKVDAPSGTALRMGEVVASALGRDLEKVAVYGREGQTGARDRQTIGFATIRAGDVVGDHTVLFAADGERVEITHKASSRMTFAKGAVRAAMWLDGKAPGLYDMQDVLGLH</sequence>
<keyword id="KW-0028">Amino-acid biosynthesis</keyword>
<keyword id="KW-0963">Cytoplasm</keyword>
<keyword id="KW-0220">Diaminopimelate biosynthesis</keyword>
<keyword id="KW-0457">Lysine biosynthesis</keyword>
<keyword id="KW-0520">NAD</keyword>
<keyword id="KW-0521">NADP</keyword>
<keyword id="KW-0560">Oxidoreductase</keyword>
<feature type="chain" id="PRO_0000141472" description="4-hydroxy-tetrahydrodipicolinate reductase">
    <location>
        <begin position="1"/>
        <end position="267"/>
    </location>
</feature>
<feature type="active site" description="Proton donor/acceptor" evidence="1">
    <location>
        <position position="155"/>
    </location>
</feature>
<feature type="active site" description="Proton donor" evidence="1">
    <location>
        <position position="159"/>
    </location>
</feature>
<feature type="binding site" evidence="1">
    <location>
        <begin position="8"/>
        <end position="13"/>
    </location>
    <ligand>
        <name>NAD(+)</name>
        <dbReference type="ChEBI" id="CHEBI:57540"/>
    </ligand>
</feature>
<feature type="binding site" evidence="1">
    <location>
        <position position="34"/>
    </location>
    <ligand>
        <name>NAD(+)</name>
        <dbReference type="ChEBI" id="CHEBI:57540"/>
    </ligand>
</feature>
<feature type="binding site" evidence="1">
    <location>
        <position position="35"/>
    </location>
    <ligand>
        <name>NADP(+)</name>
        <dbReference type="ChEBI" id="CHEBI:58349"/>
    </ligand>
</feature>
<feature type="binding site" evidence="1">
    <location>
        <begin position="98"/>
        <end position="100"/>
    </location>
    <ligand>
        <name>NAD(+)</name>
        <dbReference type="ChEBI" id="CHEBI:57540"/>
    </ligand>
</feature>
<feature type="binding site" evidence="1">
    <location>
        <begin position="122"/>
        <end position="125"/>
    </location>
    <ligand>
        <name>NAD(+)</name>
        <dbReference type="ChEBI" id="CHEBI:57540"/>
    </ligand>
</feature>
<feature type="binding site" evidence="1">
    <location>
        <position position="156"/>
    </location>
    <ligand>
        <name>(S)-2,3,4,5-tetrahydrodipicolinate</name>
        <dbReference type="ChEBI" id="CHEBI:16845"/>
    </ligand>
</feature>
<feature type="binding site" evidence="1">
    <location>
        <begin position="165"/>
        <end position="166"/>
    </location>
    <ligand>
        <name>(S)-2,3,4,5-tetrahydrodipicolinate</name>
        <dbReference type="ChEBI" id="CHEBI:16845"/>
    </ligand>
</feature>
<proteinExistence type="inferred from homology"/>